<feature type="chain" id="PRO_0000107304" description="Putative protein adenylyltransferase MJ1379">
    <location>
        <begin position="1"/>
        <end position="100"/>
    </location>
</feature>
<feature type="short sequence motif" description="GSX(10)DXD motif" evidence="2">
    <location>
        <begin position="31"/>
        <end position="45"/>
    </location>
</feature>
<feature type="binding site" evidence="2">
    <location>
        <position position="43"/>
    </location>
    <ligand>
        <name>Mg(2+)</name>
        <dbReference type="ChEBI" id="CHEBI:18420"/>
        <label>1</label>
    </ligand>
</feature>
<feature type="binding site" evidence="2">
    <location>
        <position position="43"/>
    </location>
    <ligand>
        <name>Mg(2+)</name>
        <dbReference type="ChEBI" id="CHEBI:18420"/>
        <label>2</label>
    </ligand>
</feature>
<feature type="binding site" evidence="2">
    <location>
        <position position="45"/>
    </location>
    <ligand>
        <name>Mg(2+)</name>
        <dbReference type="ChEBI" id="CHEBI:18420"/>
        <label>1</label>
    </ligand>
</feature>
<feature type="binding site" evidence="2">
    <location>
        <position position="45"/>
    </location>
    <ligand>
        <name>Mg(2+)</name>
        <dbReference type="ChEBI" id="CHEBI:18420"/>
        <label>2</label>
    </ligand>
</feature>
<feature type="binding site" evidence="2">
    <location>
        <position position="77"/>
    </location>
    <ligand>
        <name>Mg(2+)</name>
        <dbReference type="ChEBI" id="CHEBI:18420"/>
        <label>1</label>
    </ligand>
</feature>
<proteinExistence type="inferred from homology"/>
<accession>Q58774</accession>
<organism>
    <name type="scientific">Methanocaldococcus jannaschii (strain ATCC 43067 / DSM 2661 / JAL-1 / JCM 10045 / NBRC 100440)</name>
    <name type="common">Methanococcus jannaschii</name>
    <dbReference type="NCBI Taxonomy" id="243232"/>
    <lineage>
        <taxon>Archaea</taxon>
        <taxon>Methanobacteriati</taxon>
        <taxon>Methanobacteriota</taxon>
        <taxon>Methanomada group</taxon>
        <taxon>Methanococci</taxon>
        <taxon>Methanococcales</taxon>
        <taxon>Methanocaldococcaceae</taxon>
        <taxon>Methanocaldococcus</taxon>
    </lineage>
</organism>
<name>Y1379_METJA</name>
<gene>
    <name type="ordered locus">MJ1379</name>
</gene>
<sequence length="100" mass="11819">MKTLSEIKEILRKHKKILKDKYKVKSIALFGSYARGEQTEESDIDIMVEFDENNYPSFSEYLELIEYLEKILGLKVDLITKKSIHNPYVKKSIEEDLIYV</sequence>
<keyword id="KW-0067">ATP-binding</keyword>
<keyword id="KW-0460">Magnesium</keyword>
<keyword id="KW-0479">Metal-binding</keyword>
<keyword id="KW-0547">Nucleotide-binding</keyword>
<keyword id="KW-0548">Nucleotidyltransferase</keyword>
<keyword id="KW-1185">Reference proteome</keyword>
<keyword id="KW-1277">Toxin-antitoxin system</keyword>
<keyword id="KW-0808">Transferase</keyword>
<protein>
    <recommendedName>
        <fullName>Putative protein adenylyltransferase MJ1379</fullName>
        <ecNumber evidence="1">2.7.7.108</ecNumber>
    </recommendedName>
    <alternativeName>
        <fullName>Putative antitoxin MJ1379</fullName>
    </alternativeName>
</protein>
<dbReference type="EC" id="2.7.7.108" evidence="1"/>
<dbReference type="EMBL" id="L77117">
    <property type="protein sequence ID" value="AAB99389.1"/>
    <property type="molecule type" value="Genomic_DNA"/>
</dbReference>
<dbReference type="PIR" id="B64472">
    <property type="entry name" value="B64472"/>
</dbReference>
<dbReference type="RefSeq" id="WP_010870896.1">
    <property type="nucleotide sequence ID" value="NC_000909.1"/>
</dbReference>
<dbReference type="SMR" id="Q58774"/>
<dbReference type="FunCoup" id="Q58774">
    <property type="interactions" value="1"/>
</dbReference>
<dbReference type="STRING" id="243232.MJ_1379"/>
<dbReference type="PaxDb" id="243232-MJ_1379"/>
<dbReference type="EnsemblBacteria" id="AAB99389">
    <property type="protein sequence ID" value="AAB99389"/>
    <property type="gene ID" value="MJ_1379"/>
</dbReference>
<dbReference type="GeneID" id="1452282"/>
<dbReference type="KEGG" id="mja:MJ_1379"/>
<dbReference type="eggNOG" id="arCOG01206">
    <property type="taxonomic scope" value="Archaea"/>
</dbReference>
<dbReference type="HOGENOM" id="CLU_130257_10_3_2"/>
<dbReference type="InParanoid" id="Q58774"/>
<dbReference type="OrthoDB" id="9287at2157"/>
<dbReference type="PhylomeDB" id="Q58774"/>
<dbReference type="Proteomes" id="UP000000805">
    <property type="component" value="Chromosome"/>
</dbReference>
<dbReference type="GO" id="GO:0005524">
    <property type="term" value="F:ATP binding"/>
    <property type="evidence" value="ECO:0007669"/>
    <property type="project" value="UniProtKB-KW"/>
</dbReference>
<dbReference type="GO" id="GO:0046872">
    <property type="term" value="F:metal ion binding"/>
    <property type="evidence" value="ECO:0007669"/>
    <property type="project" value="UniProtKB-KW"/>
</dbReference>
<dbReference type="GO" id="GO:0016779">
    <property type="term" value="F:nucleotidyltransferase activity"/>
    <property type="evidence" value="ECO:0007669"/>
    <property type="project" value="UniProtKB-KW"/>
</dbReference>
<dbReference type="CDD" id="cd05403">
    <property type="entry name" value="NT_KNTase_like"/>
    <property type="match status" value="1"/>
</dbReference>
<dbReference type="Gene3D" id="3.30.460.10">
    <property type="entry name" value="Beta Polymerase, domain 2"/>
    <property type="match status" value="1"/>
</dbReference>
<dbReference type="InterPro" id="IPR043519">
    <property type="entry name" value="NT_sf"/>
</dbReference>
<dbReference type="InterPro" id="IPR002934">
    <property type="entry name" value="Polymerase_NTP_transf_dom"/>
</dbReference>
<dbReference type="InterPro" id="IPR052038">
    <property type="entry name" value="Type-VII_TA_antitoxin"/>
</dbReference>
<dbReference type="PANTHER" id="PTHR33571:SF19">
    <property type="entry name" value="PROTEIN ADENYLYLTRANSFERASE MJ0128-RELATED"/>
    <property type="match status" value="1"/>
</dbReference>
<dbReference type="PANTHER" id="PTHR33571">
    <property type="entry name" value="SSL8005 PROTEIN"/>
    <property type="match status" value="1"/>
</dbReference>
<dbReference type="Pfam" id="PF01909">
    <property type="entry name" value="NTP_transf_2"/>
    <property type="match status" value="1"/>
</dbReference>
<dbReference type="SUPFAM" id="SSF81301">
    <property type="entry name" value="Nucleotidyltransferase"/>
    <property type="match status" value="1"/>
</dbReference>
<evidence type="ECO:0000250" key="1">
    <source>
        <dbReference type="UniProtKB" id="A0A0B0QJN8"/>
    </source>
</evidence>
<evidence type="ECO:0000250" key="2">
    <source>
        <dbReference type="UniProtKB" id="Q8ECH7"/>
    </source>
</evidence>
<evidence type="ECO:0000305" key="3"/>
<reference key="1">
    <citation type="journal article" date="1996" name="Science">
        <title>Complete genome sequence of the methanogenic archaeon, Methanococcus jannaschii.</title>
        <authorList>
            <person name="Bult C.J."/>
            <person name="White O."/>
            <person name="Olsen G.J."/>
            <person name="Zhou L."/>
            <person name="Fleischmann R.D."/>
            <person name="Sutton G.G."/>
            <person name="Blake J.A."/>
            <person name="FitzGerald L.M."/>
            <person name="Clayton R.A."/>
            <person name="Gocayne J.D."/>
            <person name="Kerlavage A.R."/>
            <person name="Dougherty B.A."/>
            <person name="Tomb J.-F."/>
            <person name="Adams M.D."/>
            <person name="Reich C.I."/>
            <person name="Overbeek R."/>
            <person name="Kirkness E.F."/>
            <person name="Weinstock K.G."/>
            <person name="Merrick J.M."/>
            <person name="Glodek A."/>
            <person name="Scott J.L."/>
            <person name="Geoghagen N.S.M."/>
            <person name="Weidman J.F."/>
            <person name="Fuhrmann J.L."/>
            <person name="Nguyen D."/>
            <person name="Utterback T.R."/>
            <person name="Kelley J.M."/>
            <person name="Peterson J.D."/>
            <person name="Sadow P.W."/>
            <person name="Hanna M.C."/>
            <person name="Cotton M.D."/>
            <person name="Roberts K.M."/>
            <person name="Hurst M.A."/>
            <person name="Kaine B.P."/>
            <person name="Borodovsky M."/>
            <person name="Klenk H.-P."/>
            <person name="Fraser C.M."/>
            <person name="Smith H.O."/>
            <person name="Woese C.R."/>
            <person name="Venter J.C."/>
        </authorList>
    </citation>
    <scope>NUCLEOTIDE SEQUENCE [LARGE SCALE GENOMIC DNA]</scope>
    <source>
        <strain>ATCC 43067 / DSM 2661 / JAL-1 / JCM 10045 / NBRC 100440</strain>
    </source>
</reference>
<comment type="function">
    <text evidence="2">Probable antitoxin component of a putative type VII toxin-antitoxin (TA) system. Neutralizes cognate toxic MJ1380 by di-AMPylation.</text>
</comment>
<comment type="catalytic activity">
    <reaction evidence="2">
        <text>L-tyrosyl-[protein] + ATP = O-(5'-adenylyl)-L-tyrosyl-[protein] + diphosphate</text>
        <dbReference type="Rhea" id="RHEA:54288"/>
        <dbReference type="Rhea" id="RHEA-COMP:10136"/>
        <dbReference type="Rhea" id="RHEA-COMP:13846"/>
        <dbReference type="ChEBI" id="CHEBI:30616"/>
        <dbReference type="ChEBI" id="CHEBI:33019"/>
        <dbReference type="ChEBI" id="CHEBI:46858"/>
        <dbReference type="ChEBI" id="CHEBI:83624"/>
        <dbReference type="EC" id="2.7.7.108"/>
    </reaction>
</comment>
<comment type="catalytic activity">
    <reaction evidence="2">
        <text>O-(5'-adenylyl)-L-tyrosyl-[protein] + ATP = O-[5'-(adenylyl-(5'-&gt;3')-adenylyl)]-L-tyrosyl-[protein] + diphosphate</text>
        <dbReference type="Rhea" id="RHEA:66528"/>
        <dbReference type="Rhea" id="RHEA-COMP:13846"/>
        <dbReference type="Rhea" id="RHEA-COMP:17046"/>
        <dbReference type="ChEBI" id="CHEBI:30616"/>
        <dbReference type="ChEBI" id="CHEBI:33019"/>
        <dbReference type="ChEBI" id="CHEBI:83624"/>
        <dbReference type="ChEBI" id="CHEBI:167160"/>
    </reaction>
</comment>
<comment type="cofactor">
    <cofactor evidence="2">
        <name>Mg(2+)</name>
        <dbReference type="ChEBI" id="CHEBI:18420"/>
    </cofactor>
    <text evidence="2">Binds 2 Mg(2+) ions.</text>
</comment>
<comment type="subunit">
    <text evidence="2">Probably forms a complex with cognate toxin MJ1380.</text>
</comment>
<comment type="similarity">
    <text evidence="3">Belongs to the MntA antitoxin family.</text>
</comment>